<evidence type="ECO:0000255" key="1">
    <source>
        <dbReference type="HAMAP-Rule" id="MF_00334"/>
    </source>
</evidence>
<name>HGD_RHOPT</name>
<feature type="chain" id="PRO_1000119850" description="Homogentisate 1,2-dioxygenase">
    <location>
        <begin position="1"/>
        <end position="448"/>
    </location>
</feature>
<feature type="active site" description="Proton acceptor" evidence="1">
    <location>
        <position position="303"/>
    </location>
</feature>
<feature type="binding site" evidence="1">
    <location>
        <position position="346"/>
    </location>
    <ligand>
        <name>Fe cation</name>
        <dbReference type="ChEBI" id="CHEBI:24875"/>
    </ligand>
</feature>
<feature type="binding site" evidence="1">
    <location>
        <position position="352"/>
    </location>
    <ligand>
        <name>Fe cation</name>
        <dbReference type="ChEBI" id="CHEBI:24875"/>
    </ligand>
</feature>
<feature type="binding site" evidence="1">
    <location>
        <position position="361"/>
    </location>
    <ligand>
        <name>homogentisate</name>
        <dbReference type="ChEBI" id="CHEBI:16169"/>
    </ligand>
</feature>
<feature type="binding site" evidence="1">
    <location>
        <position position="382"/>
    </location>
    <ligand>
        <name>Fe cation</name>
        <dbReference type="ChEBI" id="CHEBI:24875"/>
    </ligand>
</feature>
<feature type="binding site" evidence="1">
    <location>
        <position position="382"/>
    </location>
    <ligand>
        <name>homogentisate</name>
        <dbReference type="ChEBI" id="CHEBI:16169"/>
    </ligand>
</feature>
<sequence>MNINAAPQILGRSSQDITPGYMSGFGNSFETEALPGALPVGRNSPQRCAYGLYAEQLSGSPFTAPRGANERSWLYRIRPSVKHSGRFAKTDMGLWRSAPCFEHDLPIAQLRWDPPPMPQEKLTFLQGVRTMTTAGDVNTQAGMATHLYLITQSMVDQHFYNADGEMMFVPQQGSLRLVTEFGIITIEPAEIAVIPRGIKFRVELVDGPARGYLCENYGGAFTLPERGPIGANCLANSRDFLTPVAAYEDKDTPTELYVKWGGSLYVTKLPHSPIDVVAWHGNYAPYKYDLRTYSPVGAIGFDHPDPSIFTVLTSPSETPGTANIDFVIFPERWMVADNTFRPPWYHMNIMSEFMGLIYGVYDAKPQGFVPGGASLHNMMLPHGPDREAFDHASNGELKPVKLTGTMAFMFETRYPQRVTEYAASSGLLQDDYADCWNGLEKRFDPNRP</sequence>
<protein>
    <recommendedName>
        <fullName evidence="1">Homogentisate 1,2-dioxygenase</fullName>
        <shortName evidence="1">HGDO</shortName>
        <ecNumber evidence="1">1.13.11.5</ecNumber>
    </recommendedName>
    <alternativeName>
        <fullName evidence="1">Homogentisate oxygenase</fullName>
    </alternativeName>
    <alternativeName>
        <fullName evidence="1">Homogentisic acid oxidase</fullName>
    </alternativeName>
    <alternativeName>
        <fullName evidence="1">Homogentisicase</fullName>
    </alternativeName>
</protein>
<comment type="function">
    <text evidence="1">Involved in the catabolism of homogentisate (2,5-dihydroxyphenylacetate or 2,5-OH-PhAc), a central intermediate in the degradation of phenylalanine and tyrosine. Catalyzes the oxidative ring cleavage of the aromatic ring of homogentisate to yield maleylacetoacetate.</text>
</comment>
<comment type="catalytic activity">
    <reaction evidence="1">
        <text>homogentisate + O2 = 4-maleylacetoacetate + H(+)</text>
        <dbReference type="Rhea" id="RHEA:15449"/>
        <dbReference type="ChEBI" id="CHEBI:15378"/>
        <dbReference type="ChEBI" id="CHEBI:15379"/>
        <dbReference type="ChEBI" id="CHEBI:16169"/>
        <dbReference type="ChEBI" id="CHEBI:17105"/>
        <dbReference type="EC" id="1.13.11.5"/>
    </reaction>
</comment>
<comment type="cofactor">
    <cofactor evidence="1">
        <name>Fe cation</name>
        <dbReference type="ChEBI" id="CHEBI:24875"/>
    </cofactor>
</comment>
<comment type="pathway">
    <text evidence="1">Amino-acid degradation; L-phenylalanine degradation; acetoacetate and fumarate from L-phenylalanine: step 4/6.</text>
</comment>
<comment type="subunit">
    <text evidence="1">Hexamer; dimer of trimers.</text>
</comment>
<comment type="similarity">
    <text evidence="1">Belongs to the homogentisate dioxygenase family.</text>
</comment>
<gene>
    <name evidence="1" type="primary">hmgA</name>
    <name type="ordered locus">Rpal_5153</name>
</gene>
<dbReference type="EC" id="1.13.11.5" evidence="1"/>
<dbReference type="EMBL" id="CP001096">
    <property type="protein sequence ID" value="ACF03641.1"/>
    <property type="molecule type" value="Genomic_DNA"/>
</dbReference>
<dbReference type="RefSeq" id="WP_012497801.1">
    <property type="nucleotide sequence ID" value="NC_011004.1"/>
</dbReference>
<dbReference type="SMR" id="B3QB98"/>
<dbReference type="KEGG" id="rpt:Rpal_5153"/>
<dbReference type="HOGENOM" id="CLU_027174_0_0_5"/>
<dbReference type="OrthoDB" id="9811253at2"/>
<dbReference type="UniPathway" id="UPA00139">
    <property type="reaction ID" value="UER00339"/>
</dbReference>
<dbReference type="Proteomes" id="UP000001725">
    <property type="component" value="Chromosome"/>
</dbReference>
<dbReference type="GO" id="GO:0005737">
    <property type="term" value="C:cytoplasm"/>
    <property type="evidence" value="ECO:0007669"/>
    <property type="project" value="TreeGrafter"/>
</dbReference>
<dbReference type="GO" id="GO:0004411">
    <property type="term" value="F:homogentisate 1,2-dioxygenase activity"/>
    <property type="evidence" value="ECO:0007669"/>
    <property type="project" value="UniProtKB-UniRule"/>
</dbReference>
<dbReference type="GO" id="GO:0005506">
    <property type="term" value="F:iron ion binding"/>
    <property type="evidence" value="ECO:0007669"/>
    <property type="project" value="UniProtKB-UniRule"/>
</dbReference>
<dbReference type="GO" id="GO:0006559">
    <property type="term" value="P:L-phenylalanine catabolic process"/>
    <property type="evidence" value="ECO:0007669"/>
    <property type="project" value="UniProtKB-UniRule"/>
</dbReference>
<dbReference type="GO" id="GO:0006572">
    <property type="term" value="P:tyrosine catabolic process"/>
    <property type="evidence" value="ECO:0007669"/>
    <property type="project" value="UniProtKB-UniRule"/>
</dbReference>
<dbReference type="CDD" id="cd07000">
    <property type="entry name" value="cupin_HGO_N"/>
    <property type="match status" value="1"/>
</dbReference>
<dbReference type="FunFam" id="2.60.120.10:FF:000053">
    <property type="entry name" value="Homogentisate 1,2-dioxygenase"/>
    <property type="match status" value="1"/>
</dbReference>
<dbReference type="Gene3D" id="2.60.120.10">
    <property type="entry name" value="Jelly Rolls"/>
    <property type="match status" value="1"/>
</dbReference>
<dbReference type="HAMAP" id="MF_00334">
    <property type="entry name" value="Homogentis_dioxygen"/>
    <property type="match status" value="1"/>
</dbReference>
<dbReference type="InterPro" id="IPR046451">
    <property type="entry name" value="HgmA_C"/>
</dbReference>
<dbReference type="InterPro" id="IPR046452">
    <property type="entry name" value="HgmA_N"/>
</dbReference>
<dbReference type="InterPro" id="IPR005708">
    <property type="entry name" value="Homogentis_dOase"/>
</dbReference>
<dbReference type="InterPro" id="IPR022950">
    <property type="entry name" value="Homogentis_dOase_bac"/>
</dbReference>
<dbReference type="InterPro" id="IPR014710">
    <property type="entry name" value="RmlC-like_jellyroll"/>
</dbReference>
<dbReference type="InterPro" id="IPR011051">
    <property type="entry name" value="RmlC_Cupin_sf"/>
</dbReference>
<dbReference type="NCBIfam" id="TIGR01015">
    <property type="entry name" value="hmgA"/>
    <property type="match status" value="1"/>
</dbReference>
<dbReference type="PANTHER" id="PTHR11056">
    <property type="entry name" value="HOMOGENTISATE 1,2-DIOXYGENASE"/>
    <property type="match status" value="1"/>
</dbReference>
<dbReference type="PANTHER" id="PTHR11056:SF0">
    <property type="entry name" value="HOMOGENTISATE 1,2-DIOXYGENASE"/>
    <property type="match status" value="1"/>
</dbReference>
<dbReference type="Pfam" id="PF04209">
    <property type="entry name" value="HgmA_C"/>
    <property type="match status" value="1"/>
</dbReference>
<dbReference type="Pfam" id="PF20510">
    <property type="entry name" value="HgmA_N"/>
    <property type="match status" value="1"/>
</dbReference>
<dbReference type="SUPFAM" id="SSF51182">
    <property type="entry name" value="RmlC-like cupins"/>
    <property type="match status" value="1"/>
</dbReference>
<accession>B3QB98</accession>
<keyword id="KW-0223">Dioxygenase</keyword>
<keyword id="KW-0408">Iron</keyword>
<keyword id="KW-0479">Metal-binding</keyword>
<keyword id="KW-0560">Oxidoreductase</keyword>
<keyword id="KW-0585">Phenylalanine catabolism</keyword>
<keyword id="KW-0828">Tyrosine catabolism</keyword>
<organism>
    <name type="scientific">Rhodopseudomonas palustris (strain TIE-1)</name>
    <dbReference type="NCBI Taxonomy" id="395960"/>
    <lineage>
        <taxon>Bacteria</taxon>
        <taxon>Pseudomonadati</taxon>
        <taxon>Pseudomonadota</taxon>
        <taxon>Alphaproteobacteria</taxon>
        <taxon>Hyphomicrobiales</taxon>
        <taxon>Nitrobacteraceae</taxon>
        <taxon>Rhodopseudomonas</taxon>
    </lineage>
</organism>
<reference key="1">
    <citation type="submission" date="2008-05" db="EMBL/GenBank/DDBJ databases">
        <title>Complete sequence of Rhodopseudomonas palustris TIE-1.</title>
        <authorList>
            <consortium name="US DOE Joint Genome Institute"/>
            <person name="Lucas S."/>
            <person name="Copeland A."/>
            <person name="Lapidus A."/>
            <person name="Glavina del Rio T."/>
            <person name="Dalin E."/>
            <person name="Tice H."/>
            <person name="Pitluck S."/>
            <person name="Chain P."/>
            <person name="Malfatti S."/>
            <person name="Shin M."/>
            <person name="Vergez L."/>
            <person name="Lang D."/>
            <person name="Schmutz J."/>
            <person name="Larimer F."/>
            <person name="Land M."/>
            <person name="Hauser L."/>
            <person name="Kyrpides N."/>
            <person name="Mikhailova N."/>
            <person name="Emerson D."/>
            <person name="Newman D.K."/>
            <person name="Roden E."/>
            <person name="Richardson P."/>
        </authorList>
    </citation>
    <scope>NUCLEOTIDE SEQUENCE [LARGE SCALE GENOMIC DNA]</scope>
    <source>
        <strain>TIE-1</strain>
    </source>
</reference>
<proteinExistence type="inferred from homology"/>